<dbReference type="EC" id="4.2.1.126" evidence="1"/>
<dbReference type="EMBL" id="CP001138">
    <property type="protein sequence ID" value="ACH49665.1"/>
    <property type="molecule type" value="Genomic_DNA"/>
</dbReference>
<dbReference type="RefSeq" id="WP_001048541.1">
    <property type="nucleotide sequence ID" value="NC_011149.1"/>
</dbReference>
<dbReference type="SMR" id="B5F1F1"/>
<dbReference type="KEGG" id="sea:SeAg_B2733"/>
<dbReference type="HOGENOM" id="CLU_049049_1_1_6"/>
<dbReference type="UniPathway" id="UPA00342"/>
<dbReference type="UniPathway" id="UPA00343"/>
<dbReference type="UniPathway" id="UPA00544"/>
<dbReference type="Proteomes" id="UP000008819">
    <property type="component" value="Chromosome"/>
</dbReference>
<dbReference type="GO" id="GO:0097367">
    <property type="term" value="F:carbohydrate derivative binding"/>
    <property type="evidence" value="ECO:0007669"/>
    <property type="project" value="InterPro"/>
</dbReference>
<dbReference type="GO" id="GO:0016835">
    <property type="term" value="F:carbon-oxygen lyase activity"/>
    <property type="evidence" value="ECO:0007669"/>
    <property type="project" value="UniProtKB-UniRule"/>
</dbReference>
<dbReference type="GO" id="GO:0016803">
    <property type="term" value="F:ether hydrolase activity"/>
    <property type="evidence" value="ECO:0007669"/>
    <property type="project" value="TreeGrafter"/>
</dbReference>
<dbReference type="GO" id="GO:0097175">
    <property type="term" value="P:1,6-anhydro-N-acetyl-beta-muramic acid catabolic process"/>
    <property type="evidence" value="ECO:0007669"/>
    <property type="project" value="UniProtKB-UniRule"/>
</dbReference>
<dbReference type="GO" id="GO:0046348">
    <property type="term" value="P:amino sugar catabolic process"/>
    <property type="evidence" value="ECO:0007669"/>
    <property type="project" value="InterPro"/>
</dbReference>
<dbReference type="GO" id="GO:0097173">
    <property type="term" value="P:N-acetylmuramic acid catabolic process"/>
    <property type="evidence" value="ECO:0007669"/>
    <property type="project" value="UniProtKB-UniPathway"/>
</dbReference>
<dbReference type="GO" id="GO:0009254">
    <property type="term" value="P:peptidoglycan turnover"/>
    <property type="evidence" value="ECO:0007669"/>
    <property type="project" value="UniProtKB-UniRule"/>
</dbReference>
<dbReference type="CDD" id="cd05007">
    <property type="entry name" value="SIS_Etherase"/>
    <property type="match status" value="1"/>
</dbReference>
<dbReference type="FunFam" id="1.10.8.1080:FF:000001">
    <property type="entry name" value="N-acetylmuramic acid 6-phosphate etherase"/>
    <property type="match status" value="1"/>
</dbReference>
<dbReference type="FunFam" id="3.40.50.10490:FF:000014">
    <property type="entry name" value="N-acetylmuramic acid 6-phosphate etherase"/>
    <property type="match status" value="1"/>
</dbReference>
<dbReference type="Gene3D" id="1.10.8.1080">
    <property type="match status" value="1"/>
</dbReference>
<dbReference type="Gene3D" id="3.40.50.10490">
    <property type="entry name" value="Glucose-6-phosphate isomerase like protein, domain 1"/>
    <property type="match status" value="1"/>
</dbReference>
<dbReference type="HAMAP" id="MF_00068">
    <property type="entry name" value="MurQ"/>
    <property type="match status" value="1"/>
</dbReference>
<dbReference type="InterPro" id="IPR005488">
    <property type="entry name" value="Etherase_MurQ"/>
</dbReference>
<dbReference type="InterPro" id="IPR005486">
    <property type="entry name" value="Glucokinase_regulatory_CS"/>
</dbReference>
<dbReference type="InterPro" id="IPR040190">
    <property type="entry name" value="MURQ/GCKR"/>
</dbReference>
<dbReference type="InterPro" id="IPR001347">
    <property type="entry name" value="SIS_dom"/>
</dbReference>
<dbReference type="InterPro" id="IPR046348">
    <property type="entry name" value="SIS_dom_sf"/>
</dbReference>
<dbReference type="NCBIfam" id="TIGR00274">
    <property type="entry name" value="N-acetylmuramic acid 6-phosphate etherase"/>
    <property type="match status" value="1"/>
</dbReference>
<dbReference type="NCBIfam" id="NF003915">
    <property type="entry name" value="PRK05441.1"/>
    <property type="match status" value="1"/>
</dbReference>
<dbReference type="NCBIfam" id="NF009222">
    <property type="entry name" value="PRK12570.1"/>
    <property type="match status" value="1"/>
</dbReference>
<dbReference type="PANTHER" id="PTHR10088">
    <property type="entry name" value="GLUCOKINASE REGULATORY PROTEIN"/>
    <property type="match status" value="1"/>
</dbReference>
<dbReference type="PANTHER" id="PTHR10088:SF5">
    <property type="entry name" value="N-ACETYLMURAMIC ACID 6-PHOSPHATE ETHERASE"/>
    <property type="match status" value="1"/>
</dbReference>
<dbReference type="Pfam" id="PF22645">
    <property type="entry name" value="GKRP_SIS_N"/>
    <property type="match status" value="1"/>
</dbReference>
<dbReference type="SUPFAM" id="SSF53697">
    <property type="entry name" value="SIS domain"/>
    <property type="match status" value="1"/>
</dbReference>
<dbReference type="PROSITE" id="PS01272">
    <property type="entry name" value="GCKR"/>
    <property type="match status" value="1"/>
</dbReference>
<dbReference type="PROSITE" id="PS51464">
    <property type="entry name" value="SIS"/>
    <property type="match status" value="1"/>
</dbReference>
<reference key="1">
    <citation type="journal article" date="2011" name="J. Bacteriol.">
        <title>Comparative genomics of 28 Salmonella enterica isolates: evidence for CRISPR-mediated adaptive sublineage evolution.</title>
        <authorList>
            <person name="Fricke W.F."/>
            <person name="Mammel M.K."/>
            <person name="McDermott P.F."/>
            <person name="Tartera C."/>
            <person name="White D.G."/>
            <person name="Leclerc J.E."/>
            <person name="Ravel J."/>
            <person name="Cebula T.A."/>
        </authorList>
    </citation>
    <scope>NUCLEOTIDE SEQUENCE [LARGE SCALE GENOMIC DNA]</scope>
    <source>
        <strain>SL483</strain>
    </source>
</reference>
<keyword id="KW-0119">Carbohydrate metabolism</keyword>
<keyword id="KW-0456">Lyase</keyword>
<comment type="function">
    <text evidence="1">Specifically catalyzes the cleavage of the D-lactyl ether substituent of MurNAc 6-phosphate, producing GlcNAc 6-phosphate and D-lactate. Together with AnmK, is also required for the utilization of anhydro-N-acetylmuramic acid (anhMurNAc) either imported from the medium or derived from its own cell wall murein, and thus plays a role in cell wall recycling.</text>
</comment>
<comment type="catalytic activity">
    <reaction evidence="1">
        <text>N-acetyl-D-muramate 6-phosphate + H2O = N-acetyl-D-glucosamine 6-phosphate + (R)-lactate</text>
        <dbReference type="Rhea" id="RHEA:26410"/>
        <dbReference type="ChEBI" id="CHEBI:15377"/>
        <dbReference type="ChEBI" id="CHEBI:16004"/>
        <dbReference type="ChEBI" id="CHEBI:57513"/>
        <dbReference type="ChEBI" id="CHEBI:58722"/>
        <dbReference type="EC" id="4.2.1.126"/>
    </reaction>
</comment>
<comment type="pathway">
    <text evidence="1">Amino-sugar metabolism; 1,6-anhydro-N-acetylmuramate degradation.</text>
</comment>
<comment type="pathway">
    <text evidence="1">Amino-sugar metabolism; N-acetylmuramate degradation.</text>
</comment>
<comment type="pathway">
    <text evidence="1">Cell wall biogenesis; peptidoglycan recycling.</text>
</comment>
<comment type="subunit">
    <text evidence="1">Homodimer.</text>
</comment>
<comment type="induction">
    <text evidence="1">Induced by MurNAc 6-phosphate that releases the repressor MurR from the DNA. Repressed by MurR in the absence of MurNAc 6-phosphate.</text>
</comment>
<comment type="miscellaneous">
    <text evidence="1">A lyase-type mechanism (elimination/hydration) is suggested for the cleavage of the lactyl ether bond of MurNAc 6-phosphate, with the formation of an alpha,beta-unsaturated aldehyde intermediate with (E)-stereochemistry, followed by the syn addition of water to give product.</text>
</comment>
<comment type="similarity">
    <text evidence="1">Belongs to the GCKR-like family. MurNAc-6-P etherase subfamily.</text>
</comment>
<gene>
    <name evidence="1" type="primary">murQ</name>
    <name type="ordered locus">SeAg_B2733</name>
</gene>
<accession>B5F1F1</accession>
<protein>
    <recommendedName>
        <fullName evidence="1">N-acetylmuramic acid 6-phosphate etherase</fullName>
        <shortName evidence="1">MurNAc-6-P etherase</shortName>
        <ecNumber evidence="1">4.2.1.126</ecNumber>
    </recommendedName>
    <alternativeName>
        <fullName evidence="1">N-acetylmuramic acid 6-phosphate hydrolase</fullName>
    </alternativeName>
    <alternativeName>
        <fullName evidence="1">N-acetylmuramic acid 6-phosphate lyase</fullName>
    </alternativeName>
</protein>
<name>MURQ_SALA4</name>
<feature type="chain" id="PRO_1000092311" description="N-acetylmuramic acid 6-phosphate etherase">
    <location>
        <begin position="1"/>
        <end position="297"/>
    </location>
</feature>
<feature type="domain" description="SIS" evidence="1">
    <location>
        <begin position="55"/>
        <end position="218"/>
    </location>
</feature>
<feature type="active site" description="Proton donor" evidence="1">
    <location>
        <position position="83"/>
    </location>
</feature>
<feature type="active site" evidence="1">
    <location>
        <position position="114"/>
    </location>
</feature>
<proteinExistence type="inferred from homology"/>
<evidence type="ECO:0000255" key="1">
    <source>
        <dbReference type="HAMAP-Rule" id="MF_00068"/>
    </source>
</evidence>
<organism>
    <name type="scientific">Salmonella agona (strain SL483)</name>
    <dbReference type="NCBI Taxonomy" id="454166"/>
    <lineage>
        <taxon>Bacteria</taxon>
        <taxon>Pseudomonadati</taxon>
        <taxon>Pseudomonadota</taxon>
        <taxon>Gammaproteobacteria</taxon>
        <taxon>Enterobacterales</taxon>
        <taxon>Enterobacteriaceae</taxon>
        <taxon>Salmonella</taxon>
    </lineage>
</organism>
<sequence>MNLGTLVSETRNPQTMDLDALSTPELVKRFNEQDTRVAEAVKATLPDVARAVDAAAAALKSGGRIIYMGAGTSGRLGVLDASECPPTFGVPHGLVVGLIAGGPGALLKAVEGAEDSQQAGEDDLVALNLQEQDLVVGLAASGRTPYVIGGLRYARQSGCTTVAVSCNPDSPIAREANIAISPVVGPEALTGSTRLKSGTAQKMVLNMISTGAMVKFGKVYQNLMVDMKATNVKLVDRACRMVVEATGIGREEAETLLKQTDFEVKPAILMALTGLDAAAAREKLAAHQGFLRAALEH</sequence>